<accession>P61695</accession>
<name>IF1_THET2</name>
<protein>
    <recommendedName>
        <fullName evidence="1">Translation initiation factor IF-1</fullName>
    </recommendedName>
</protein>
<organism>
    <name type="scientific">Thermus thermophilus (strain ATCC BAA-163 / DSM 7039 / HB27)</name>
    <dbReference type="NCBI Taxonomy" id="262724"/>
    <lineage>
        <taxon>Bacteria</taxon>
        <taxon>Thermotogati</taxon>
        <taxon>Deinococcota</taxon>
        <taxon>Deinococci</taxon>
        <taxon>Thermales</taxon>
        <taxon>Thermaceae</taxon>
        <taxon>Thermus</taxon>
    </lineage>
</organism>
<evidence type="ECO:0000255" key="1">
    <source>
        <dbReference type="HAMAP-Rule" id="MF_00075"/>
    </source>
</evidence>
<feature type="chain" id="PRO_0000095892" description="Translation initiation factor IF-1">
    <location>
        <begin position="1"/>
        <end position="72"/>
    </location>
</feature>
<feature type="domain" description="S1-like" evidence="1">
    <location>
        <begin position="1"/>
        <end position="72"/>
    </location>
</feature>
<keyword id="KW-0963">Cytoplasm</keyword>
<keyword id="KW-0396">Initiation factor</keyword>
<keyword id="KW-0648">Protein biosynthesis</keyword>
<keyword id="KW-0694">RNA-binding</keyword>
<keyword id="KW-0699">rRNA-binding</keyword>
<gene>
    <name evidence="1" type="primary">infA</name>
    <name type="ordered locus">TT_C1305</name>
</gene>
<proteinExistence type="inferred from homology"/>
<comment type="function">
    <text evidence="1">One of the essential components for the initiation of protein synthesis. Stabilizes the binding of IF-2 and IF-3 on the 30S subunit to which N-formylmethionyl-tRNA(fMet) subsequently binds. Helps modulate mRNA selection, yielding the 30S pre-initiation complex (PIC). Upon addition of the 50S ribosomal subunit IF-1, IF-2 and IF-3 are released leaving the mature 70S translation initiation complex.</text>
</comment>
<comment type="subunit">
    <text evidence="1">Component of the 30S ribosomal translation pre-initiation complex which assembles on the 30S ribosome in the order IF-2 and IF-3, IF-1 and N-formylmethionyl-tRNA(fMet); mRNA recruitment can occur at any time during PIC assembly.</text>
</comment>
<comment type="subcellular location">
    <subcellularLocation>
        <location evidence="1">Cytoplasm</location>
    </subcellularLocation>
</comment>
<comment type="similarity">
    <text evidence="1">Belongs to the IF-1 family.</text>
</comment>
<sequence>MAKEKDTIRTEGVVTEALPNATFRVKLDSGPEILAYISGKMRMHYIRILPGDRVVVEITPYDPTRGRIVYRK</sequence>
<reference key="1">
    <citation type="journal article" date="2004" name="Nat. Biotechnol.">
        <title>The genome sequence of the extreme thermophile Thermus thermophilus.</title>
        <authorList>
            <person name="Henne A."/>
            <person name="Brueggemann H."/>
            <person name="Raasch C."/>
            <person name="Wiezer A."/>
            <person name="Hartsch T."/>
            <person name="Liesegang H."/>
            <person name="Johann A."/>
            <person name="Lienard T."/>
            <person name="Gohl O."/>
            <person name="Martinez-Arias R."/>
            <person name="Jacobi C."/>
            <person name="Starkuviene V."/>
            <person name="Schlenczeck S."/>
            <person name="Dencker S."/>
            <person name="Huber R."/>
            <person name="Klenk H.-P."/>
            <person name="Kramer W."/>
            <person name="Merkl R."/>
            <person name="Gottschalk G."/>
            <person name="Fritz H.-J."/>
        </authorList>
    </citation>
    <scope>NUCLEOTIDE SEQUENCE [LARGE SCALE GENOMIC DNA]</scope>
    <source>
        <strain>ATCC BAA-163 / DSM 7039 / HB27</strain>
    </source>
</reference>
<dbReference type="EMBL" id="AE017221">
    <property type="protein sequence ID" value="AAS81647.1"/>
    <property type="molecule type" value="Genomic_DNA"/>
</dbReference>
<dbReference type="RefSeq" id="WP_008633373.1">
    <property type="nucleotide sequence ID" value="NC_005835.1"/>
</dbReference>
<dbReference type="SMR" id="P61695"/>
<dbReference type="GeneID" id="3168806"/>
<dbReference type="KEGG" id="tth:TT_C1305"/>
<dbReference type="eggNOG" id="COG0361">
    <property type="taxonomic scope" value="Bacteria"/>
</dbReference>
<dbReference type="HOGENOM" id="CLU_151267_1_0_0"/>
<dbReference type="OrthoDB" id="9803250at2"/>
<dbReference type="Proteomes" id="UP000000592">
    <property type="component" value="Chromosome"/>
</dbReference>
<dbReference type="GO" id="GO:0005829">
    <property type="term" value="C:cytosol"/>
    <property type="evidence" value="ECO:0007669"/>
    <property type="project" value="TreeGrafter"/>
</dbReference>
<dbReference type="GO" id="GO:0043022">
    <property type="term" value="F:ribosome binding"/>
    <property type="evidence" value="ECO:0007669"/>
    <property type="project" value="UniProtKB-UniRule"/>
</dbReference>
<dbReference type="GO" id="GO:0019843">
    <property type="term" value="F:rRNA binding"/>
    <property type="evidence" value="ECO:0007669"/>
    <property type="project" value="UniProtKB-UniRule"/>
</dbReference>
<dbReference type="GO" id="GO:0003743">
    <property type="term" value="F:translation initiation factor activity"/>
    <property type="evidence" value="ECO:0007669"/>
    <property type="project" value="UniProtKB-UniRule"/>
</dbReference>
<dbReference type="CDD" id="cd04451">
    <property type="entry name" value="S1_IF1"/>
    <property type="match status" value="1"/>
</dbReference>
<dbReference type="FunFam" id="2.40.50.140:FF:000002">
    <property type="entry name" value="Translation initiation factor IF-1"/>
    <property type="match status" value="1"/>
</dbReference>
<dbReference type="Gene3D" id="2.40.50.140">
    <property type="entry name" value="Nucleic acid-binding proteins"/>
    <property type="match status" value="1"/>
</dbReference>
<dbReference type="HAMAP" id="MF_00075">
    <property type="entry name" value="IF_1"/>
    <property type="match status" value="1"/>
</dbReference>
<dbReference type="InterPro" id="IPR012340">
    <property type="entry name" value="NA-bd_OB-fold"/>
</dbReference>
<dbReference type="InterPro" id="IPR006196">
    <property type="entry name" value="RNA-binding_domain_S1_IF1"/>
</dbReference>
<dbReference type="InterPro" id="IPR004368">
    <property type="entry name" value="TIF_IF1"/>
</dbReference>
<dbReference type="NCBIfam" id="TIGR00008">
    <property type="entry name" value="infA"/>
    <property type="match status" value="1"/>
</dbReference>
<dbReference type="PANTHER" id="PTHR33370">
    <property type="entry name" value="TRANSLATION INITIATION FACTOR IF-1, CHLOROPLASTIC"/>
    <property type="match status" value="1"/>
</dbReference>
<dbReference type="PANTHER" id="PTHR33370:SF1">
    <property type="entry name" value="TRANSLATION INITIATION FACTOR IF-1, CHLOROPLASTIC"/>
    <property type="match status" value="1"/>
</dbReference>
<dbReference type="Pfam" id="PF01176">
    <property type="entry name" value="eIF-1a"/>
    <property type="match status" value="1"/>
</dbReference>
<dbReference type="SUPFAM" id="SSF50249">
    <property type="entry name" value="Nucleic acid-binding proteins"/>
    <property type="match status" value="1"/>
</dbReference>
<dbReference type="PROSITE" id="PS50832">
    <property type="entry name" value="S1_IF1_TYPE"/>
    <property type="match status" value="1"/>
</dbReference>